<proteinExistence type="inferred from homology"/>
<gene>
    <name evidence="1" type="primary">rpmI</name>
    <name type="ordered locus">CJE0294</name>
</gene>
<dbReference type="EMBL" id="CP000025">
    <property type="protein sequence ID" value="AAW34885.1"/>
    <property type="molecule type" value="Genomic_DNA"/>
</dbReference>
<dbReference type="RefSeq" id="WP_002777995.1">
    <property type="nucleotide sequence ID" value="NC_003912.7"/>
</dbReference>
<dbReference type="SMR" id="Q5HWM0"/>
<dbReference type="GeneID" id="98395746"/>
<dbReference type="KEGG" id="cjr:CJE0294"/>
<dbReference type="HOGENOM" id="CLU_169643_1_2_7"/>
<dbReference type="GO" id="GO:0022625">
    <property type="term" value="C:cytosolic large ribosomal subunit"/>
    <property type="evidence" value="ECO:0007669"/>
    <property type="project" value="TreeGrafter"/>
</dbReference>
<dbReference type="GO" id="GO:0003735">
    <property type="term" value="F:structural constituent of ribosome"/>
    <property type="evidence" value="ECO:0007669"/>
    <property type="project" value="InterPro"/>
</dbReference>
<dbReference type="GO" id="GO:0006412">
    <property type="term" value="P:translation"/>
    <property type="evidence" value="ECO:0007669"/>
    <property type="project" value="UniProtKB-UniRule"/>
</dbReference>
<dbReference type="FunFam" id="4.10.410.60:FF:000001">
    <property type="entry name" value="50S ribosomal protein L35"/>
    <property type="match status" value="1"/>
</dbReference>
<dbReference type="Gene3D" id="4.10.410.60">
    <property type="match status" value="1"/>
</dbReference>
<dbReference type="HAMAP" id="MF_00514">
    <property type="entry name" value="Ribosomal_bL35"/>
    <property type="match status" value="1"/>
</dbReference>
<dbReference type="InterPro" id="IPR001706">
    <property type="entry name" value="Ribosomal_bL35"/>
</dbReference>
<dbReference type="InterPro" id="IPR021137">
    <property type="entry name" value="Ribosomal_bL35-like"/>
</dbReference>
<dbReference type="InterPro" id="IPR018265">
    <property type="entry name" value="Ribosomal_bL35_CS"/>
</dbReference>
<dbReference type="InterPro" id="IPR037229">
    <property type="entry name" value="Ribosomal_bL35_sf"/>
</dbReference>
<dbReference type="NCBIfam" id="TIGR00001">
    <property type="entry name" value="rpmI_bact"/>
    <property type="match status" value="1"/>
</dbReference>
<dbReference type="PANTHER" id="PTHR33343">
    <property type="entry name" value="54S RIBOSOMAL PROTEIN BL35M"/>
    <property type="match status" value="1"/>
</dbReference>
<dbReference type="PANTHER" id="PTHR33343:SF1">
    <property type="entry name" value="LARGE RIBOSOMAL SUBUNIT PROTEIN BL35M"/>
    <property type="match status" value="1"/>
</dbReference>
<dbReference type="Pfam" id="PF01632">
    <property type="entry name" value="Ribosomal_L35p"/>
    <property type="match status" value="1"/>
</dbReference>
<dbReference type="PRINTS" id="PR00064">
    <property type="entry name" value="RIBOSOMALL35"/>
</dbReference>
<dbReference type="SUPFAM" id="SSF143034">
    <property type="entry name" value="L35p-like"/>
    <property type="match status" value="1"/>
</dbReference>
<dbReference type="PROSITE" id="PS00936">
    <property type="entry name" value="RIBOSOMAL_L35"/>
    <property type="match status" value="1"/>
</dbReference>
<reference key="1">
    <citation type="journal article" date="2005" name="PLoS Biol.">
        <title>Major structural differences and novel potential virulence mechanisms from the genomes of multiple Campylobacter species.</title>
        <authorList>
            <person name="Fouts D.E."/>
            <person name="Mongodin E.F."/>
            <person name="Mandrell R.E."/>
            <person name="Miller W.G."/>
            <person name="Rasko D.A."/>
            <person name="Ravel J."/>
            <person name="Brinkac L.M."/>
            <person name="DeBoy R.T."/>
            <person name="Parker C.T."/>
            <person name="Daugherty S.C."/>
            <person name="Dodson R.J."/>
            <person name="Durkin A.S."/>
            <person name="Madupu R."/>
            <person name="Sullivan S.A."/>
            <person name="Shetty J.U."/>
            <person name="Ayodeji M.A."/>
            <person name="Shvartsbeyn A."/>
            <person name="Schatz M.C."/>
            <person name="Badger J.H."/>
            <person name="Fraser C.M."/>
            <person name="Nelson K.E."/>
        </authorList>
    </citation>
    <scope>NUCLEOTIDE SEQUENCE [LARGE SCALE GENOMIC DNA]</scope>
    <source>
        <strain>RM1221</strain>
    </source>
</reference>
<sequence>MPKMKSVKSAVKRFKVGKNKIKRGSAFRSHILTKKPAKRMRDLRTAKYVHSTNVKAVEKMLGI</sequence>
<feature type="chain" id="PRO_0000258653" description="Large ribosomal subunit protein bL35">
    <location>
        <begin position="1"/>
        <end position="63"/>
    </location>
</feature>
<evidence type="ECO:0000255" key="1">
    <source>
        <dbReference type="HAMAP-Rule" id="MF_00514"/>
    </source>
</evidence>
<evidence type="ECO:0000305" key="2"/>
<name>RL35_CAMJR</name>
<comment type="similarity">
    <text evidence="1">Belongs to the bacterial ribosomal protein bL35 family.</text>
</comment>
<organism>
    <name type="scientific">Campylobacter jejuni (strain RM1221)</name>
    <dbReference type="NCBI Taxonomy" id="195099"/>
    <lineage>
        <taxon>Bacteria</taxon>
        <taxon>Pseudomonadati</taxon>
        <taxon>Campylobacterota</taxon>
        <taxon>Epsilonproteobacteria</taxon>
        <taxon>Campylobacterales</taxon>
        <taxon>Campylobacteraceae</taxon>
        <taxon>Campylobacter</taxon>
    </lineage>
</organism>
<keyword id="KW-0687">Ribonucleoprotein</keyword>
<keyword id="KW-0689">Ribosomal protein</keyword>
<protein>
    <recommendedName>
        <fullName evidence="1">Large ribosomal subunit protein bL35</fullName>
    </recommendedName>
    <alternativeName>
        <fullName evidence="2">50S ribosomal protein L35</fullName>
    </alternativeName>
</protein>
<accession>Q5HWM0</accession>